<feature type="chain" id="PRO_1000014195" description="Small ribosomal subunit protein uS7">
    <location>
        <begin position="1"/>
        <end position="157"/>
    </location>
</feature>
<gene>
    <name evidence="1" type="primary">rpsG</name>
    <name type="ordered locus">FTN_0236</name>
</gene>
<sequence length="157" mass="17808">MSRRNRAPKRDILPDPKYKSQVVAKFVNHIMLSGKKSIAEKIVYGAFDKIKAKDASANEVEVFEKALESVSPMVEVKSRRVGGATYQVPVEVRPERRQTLGMRWIIDAARKRKENTMGDRVAAEILEAVEGRGAAVKKREDTHKMAEANKAFAHFRW</sequence>
<protein>
    <recommendedName>
        <fullName evidence="1">Small ribosomal subunit protein uS7</fullName>
    </recommendedName>
    <alternativeName>
        <fullName evidence="2">30S ribosomal protein S7</fullName>
    </alternativeName>
</protein>
<evidence type="ECO:0000255" key="1">
    <source>
        <dbReference type="HAMAP-Rule" id="MF_00480"/>
    </source>
</evidence>
<evidence type="ECO:0000305" key="2"/>
<reference key="1">
    <citation type="journal article" date="2007" name="Genome Biol.">
        <title>Comparison of Francisella tularensis genomes reveals evolutionary events associated with the emergence of human pathogenic strains.</title>
        <authorList>
            <person name="Rohmer L."/>
            <person name="Fong C."/>
            <person name="Abmayr S."/>
            <person name="Wasnick M."/>
            <person name="Larson Freeman T.J."/>
            <person name="Radey M."/>
            <person name="Guina T."/>
            <person name="Svensson K."/>
            <person name="Hayden H.S."/>
            <person name="Jacobs M."/>
            <person name="Gallagher L.A."/>
            <person name="Manoil C."/>
            <person name="Ernst R.K."/>
            <person name="Drees B."/>
            <person name="Buckley D."/>
            <person name="Haugen E."/>
            <person name="Bovee D."/>
            <person name="Zhou Y."/>
            <person name="Chang J."/>
            <person name="Levy R."/>
            <person name="Lim R."/>
            <person name="Gillett W."/>
            <person name="Guenthener D."/>
            <person name="Kang A."/>
            <person name="Shaffer S.A."/>
            <person name="Taylor G."/>
            <person name="Chen J."/>
            <person name="Gallis B."/>
            <person name="D'Argenio D.A."/>
            <person name="Forsman M."/>
            <person name="Olson M.V."/>
            <person name="Goodlett D.R."/>
            <person name="Kaul R."/>
            <person name="Miller S.I."/>
            <person name="Brittnacher M.J."/>
        </authorList>
    </citation>
    <scope>NUCLEOTIDE SEQUENCE [LARGE SCALE GENOMIC DNA]</scope>
    <source>
        <strain>U112</strain>
    </source>
</reference>
<dbReference type="EMBL" id="CP000439">
    <property type="protein sequence ID" value="ABK89145.1"/>
    <property type="molecule type" value="Genomic_DNA"/>
</dbReference>
<dbReference type="RefSeq" id="WP_003021606.1">
    <property type="nucleotide sequence ID" value="NZ_CP009633.1"/>
</dbReference>
<dbReference type="SMR" id="A0Q4I0"/>
<dbReference type="GeneID" id="75264264"/>
<dbReference type="KEGG" id="ftn:FTN_0236"/>
<dbReference type="KEGG" id="ftx:AW25_1806"/>
<dbReference type="BioCyc" id="FTUL401614:G1G75-247-MONOMER"/>
<dbReference type="Proteomes" id="UP000000762">
    <property type="component" value="Chromosome"/>
</dbReference>
<dbReference type="GO" id="GO:0015935">
    <property type="term" value="C:small ribosomal subunit"/>
    <property type="evidence" value="ECO:0007669"/>
    <property type="project" value="InterPro"/>
</dbReference>
<dbReference type="GO" id="GO:0019843">
    <property type="term" value="F:rRNA binding"/>
    <property type="evidence" value="ECO:0007669"/>
    <property type="project" value="UniProtKB-UniRule"/>
</dbReference>
<dbReference type="GO" id="GO:0003735">
    <property type="term" value="F:structural constituent of ribosome"/>
    <property type="evidence" value="ECO:0007669"/>
    <property type="project" value="InterPro"/>
</dbReference>
<dbReference type="GO" id="GO:0000049">
    <property type="term" value="F:tRNA binding"/>
    <property type="evidence" value="ECO:0007669"/>
    <property type="project" value="UniProtKB-UniRule"/>
</dbReference>
<dbReference type="GO" id="GO:0006412">
    <property type="term" value="P:translation"/>
    <property type="evidence" value="ECO:0007669"/>
    <property type="project" value="UniProtKB-UniRule"/>
</dbReference>
<dbReference type="CDD" id="cd14869">
    <property type="entry name" value="uS7_Bacteria"/>
    <property type="match status" value="1"/>
</dbReference>
<dbReference type="FunFam" id="1.10.455.10:FF:000001">
    <property type="entry name" value="30S ribosomal protein S7"/>
    <property type="match status" value="1"/>
</dbReference>
<dbReference type="Gene3D" id="1.10.455.10">
    <property type="entry name" value="Ribosomal protein S7 domain"/>
    <property type="match status" value="1"/>
</dbReference>
<dbReference type="HAMAP" id="MF_00480_B">
    <property type="entry name" value="Ribosomal_uS7_B"/>
    <property type="match status" value="1"/>
</dbReference>
<dbReference type="InterPro" id="IPR000235">
    <property type="entry name" value="Ribosomal_uS7"/>
</dbReference>
<dbReference type="InterPro" id="IPR005717">
    <property type="entry name" value="Ribosomal_uS7_bac/org-type"/>
</dbReference>
<dbReference type="InterPro" id="IPR020606">
    <property type="entry name" value="Ribosomal_uS7_CS"/>
</dbReference>
<dbReference type="InterPro" id="IPR023798">
    <property type="entry name" value="Ribosomal_uS7_dom"/>
</dbReference>
<dbReference type="InterPro" id="IPR036823">
    <property type="entry name" value="Ribosomal_uS7_dom_sf"/>
</dbReference>
<dbReference type="NCBIfam" id="TIGR01029">
    <property type="entry name" value="rpsG_bact"/>
    <property type="match status" value="1"/>
</dbReference>
<dbReference type="PANTHER" id="PTHR11205">
    <property type="entry name" value="RIBOSOMAL PROTEIN S7"/>
    <property type="match status" value="1"/>
</dbReference>
<dbReference type="Pfam" id="PF00177">
    <property type="entry name" value="Ribosomal_S7"/>
    <property type="match status" value="1"/>
</dbReference>
<dbReference type="PIRSF" id="PIRSF002122">
    <property type="entry name" value="RPS7p_RPS7a_RPS5e_RPS7o"/>
    <property type="match status" value="1"/>
</dbReference>
<dbReference type="SUPFAM" id="SSF47973">
    <property type="entry name" value="Ribosomal protein S7"/>
    <property type="match status" value="1"/>
</dbReference>
<dbReference type="PROSITE" id="PS00052">
    <property type="entry name" value="RIBOSOMAL_S7"/>
    <property type="match status" value="1"/>
</dbReference>
<comment type="function">
    <text evidence="1">One of the primary rRNA binding proteins, it binds directly to 16S rRNA where it nucleates assembly of the head domain of the 30S subunit. Is located at the subunit interface close to the decoding center, probably blocks exit of the E-site tRNA.</text>
</comment>
<comment type="subunit">
    <text evidence="1">Part of the 30S ribosomal subunit. Contacts proteins S9 and S11.</text>
</comment>
<comment type="similarity">
    <text evidence="1">Belongs to the universal ribosomal protein uS7 family.</text>
</comment>
<accession>A0Q4I0</accession>
<organism>
    <name type="scientific">Francisella tularensis subsp. novicida (strain U112)</name>
    <dbReference type="NCBI Taxonomy" id="401614"/>
    <lineage>
        <taxon>Bacteria</taxon>
        <taxon>Pseudomonadati</taxon>
        <taxon>Pseudomonadota</taxon>
        <taxon>Gammaproteobacteria</taxon>
        <taxon>Thiotrichales</taxon>
        <taxon>Francisellaceae</taxon>
        <taxon>Francisella</taxon>
    </lineage>
</organism>
<name>RS7_FRATN</name>
<proteinExistence type="inferred from homology"/>
<keyword id="KW-0687">Ribonucleoprotein</keyword>
<keyword id="KW-0689">Ribosomal protein</keyword>
<keyword id="KW-0694">RNA-binding</keyword>
<keyword id="KW-0699">rRNA-binding</keyword>
<keyword id="KW-0820">tRNA-binding</keyword>